<accession>Q6G1J5</accession>
<proteinExistence type="inferred from homology"/>
<protein>
    <recommendedName>
        <fullName evidence="1">3-hydroxyacyl-[acyl-carrier-protein] dehydratase FabZ</fullName>
        <ecNumber evidence="1">4.2.1.59</ecNumber>
    </recommendedName>
    <alternativeName>
        <fullName evidence="1">(3R)-hydroxymyristoyl-[acyl-carrier-protein] dehydratase</fullName>
        <shortName evidence="1">(3R)-hydroxymyristoyl-ACP dehydrase</shortName>
    </alternativeName>
    <alternativeName>
        <fullName evidence="1">Beta-hydroxyacyl-ACP dehydratase</fullName>
    </alternativeName>
</protein>
<gene>
    <name evidence="1" type="primary">fabZ</name>
    <name type="ordered locus">BQ06930</name>
</gene>
<comment type="function">
    <text evidence="1">Involved in unsaturated fatty acids biosynthesis. Catalyzes the dehydration of short chain beta-hydroxyacyl-ACPs and long chain saturated and unsaturated beta-hydroxyacyl-ACPs.</text>
</comment>
<comment type="catalytic activity">
    <reaction evidence="1">
        <text>a (3R)-hydroxyacyl-[ACP] = a (2E)-enoyl-[ACP] + H2O</text>
        <dbReference type="Rhea" id="RHEA:13097"/>
        <dbReference type="Rhea" id="RHEA-COMP:9925"/>
        <dbReference type="Rhea" id="RHEA-COMP:9945"/>
        <dbReference type="ChEBI" id="CHEBI:15377"/>
        <dbReference type="ChEBI" id="CHEBI:78784"/>
        <dbReference type="ChEBI" id="CHEBI:78827"/>
        <dbReference type="EC" id="4.2.1.59"/>
    </reaction>
</comment>
<comment type="subcellular location">
    <subcellularLocation>
        <location evidence="1">Cytoplasm</location>
    </subcellularLocation>
</comment>
<comment type="similarity">
    <text evidence="1">Belongs to the thioester dehydratase family. FabZ subfamily.</text>
</comment>
<keyword id="KW-0963">Cytoplasm</keyword>
<keyword id="KW-0441">Lipid A biosynthesis</keyword>
<keyword id="KW-0444">Lipid biosynthesis</keyword>
<keyword id="KW-0443">Lipid metabolism</keyword>
<keyword id="KW-0456">Lyase</keyword>
<evidence type="ECO:0000255" key="1">
    <source>
        <dbReference type="HAMAP-Rule" id="MF_00406"/>
    </source>
</evidence>
<name>FABZ_BARQU</name>
<dbReference type="EC" id="4.2.1.59" evidence="1"/>
<dbReference type="EMBL" id="BX897700">
    <property type="protein sequence ID" value="CAF26182.1"/>
    <property type="molecule type" value="Genomic_DNA"/>
</dbReference>
<dbReference type="RefSeq" id="WP_011179437.1">
    <property type="nucleotide sequence ID" value="NC_005955.1"/>
</dbReference>
<dbReference type="SMR" id="Q6G1J5"/>
<dbReference type="GeneID" id="56532950"/>
<dbReference type="KEGG" id="bqu:BQ06930"/>
<dbReference type="eggNOG" id="COG0764">
    <property type="taxonomic scope" value="Bacteria"/>
</dbReference>
<dbReference type="HOGENOM" id="CLU_078912_1_2_5"/>
<dbReference type="OrthoDB" id="9772788at2"/>
<dbReference type="Proteomes" id="UP000000597">
    <property type="component" value="Chromosome"/>
</dbReference>
<dbReference type="GO" id="GO:0005737">
    <property type="term" value="C:cytoplasm"/>
    <property type="evidence" value="ECO:0007669"/>
    <property type="project" value="UniProtKB-SubCell"/>
</dbReference>
<dbReference type="GO" id="GO:0016020">
    <property type="term" value="C:membrane"/>
    <property type="evidence" value="ECO:0007669"/>
    <property type="project" value="GOC"/>
</dbReference>
<dbReference type="GO" id="GO:0019171">
    <property type="term" value="F:(3R)-hydroxyacyl-[acyl-carrier-protein] dehydratase activity"/>
    <property type="evidence" value="ECO:0007669"/>
    <property type="project" value="UniProtKB-EC"/>
</dbReference>
<dbReference type="GO" id="GO:0006633">
    <property type="term" value="P:fatty acid biosynthetic process"/>
    <property type="evidence" value="ECO:0007669"/>
    <property type="project" value="UniProtKB-UniRule"/>
</dbReference>
<dbReference type="GO" id="GO:0009245">
    <property type="term" value="P:lipid A biosynthetic process"/>
    <property type="evidence" value="ECO:0007669"/>
    <property type="project" value="UniProtKB-UniRule"/>
</dbReference>
<dbReference type="CDD" id="cd01288">
    <property type="entry name" value="FabZ"/>
    <property type="match status" value="1"/>
</dbReference>
<dbReference type="FunFam" id="3.10.129.10:FF:000001">
    <property type="entry name" value="3-hydroxyacyl-[acyl-carrier-protein] dehydratase FabZ"/>
    <property type="match status" value="1"/>
</dbReference>
<dbReference type="Gene3D" id="3.10.129.10">
    <property type="entry name" value="Hotdog Thioesterase"/>
    <property type="match status" value="1"/>
</dbReference>
<dbReference type="HAMAP" id="MF_00406">
    <property type="entry name" value="FabZ"/>
    <property type="match status" value="1"/>
</dbReference>
<dbReference type="InterPro" id="IPR013114">
    <property type="entry name" value="FabA_FabZ"/>
</dbReference>
<dbReference type="InterPro" id="IPR010084">
    <property type="entry name" value="FabZ"/>
</dbReference>
<dbReference type="InterPro" id="IPR029069">
    <property type="entry name" value="HotDog_dom_sf"/>
</dbReference>
<dbReference type="NCBIfam" id="TIGR01750">
    <property type="entry name" value="fabZ"/>
    <property type="match status" value="1"/>
</dbReference>
<dbReference type="NCBIfam" id="NF000582">
    <property type="entry name" value="PRK00006.1"/>
    <property type="match status" value="1"/>
</dbReference>
<dbReference type="PANTHER" id="PTHR30272">
    <property type="entry name" value="3-HYDROXYACYL-[ACYL-CARRIER-PROTEIN] DEHYDRATASE"/>
    <property type="match status" value="1"/>
</dbReference>
<dbReference type="PANTHER" id="PTHR30272:SF1">
    <property type="entry name" value="3-HYDROXYACYL-[ACYL-CARRIER-PROTEIN] DEHYDRATASE"/>
    <property type="match status" value="1"/>
</dbReference>
<dbReference type="Pfam" id="PF07977">
    <property type="entry name" value="FabA"/>
    <property type="match status" value="1"/>
</dbReference>
<dbReference type="SUPFAM" id="SSF54637">
    <property type="entry name" value="Thioesterase/thiol ester dehydrase-isomerase"/>
    <property type="match status" value="1"/>
</dbReference>
<sequence>MINTEGTKSLEAVDIEELLSILPHRYPFLLIDRIVEIDGEQQAIGIKNITINEPHFMGHFPAKPVMPGVLILEAMAQTAGAISLLRLGNKQTNLVYLMTVDNAKFRKPVIPGDQLKIHVRLLKKRSGMRRFSCVAEVEGVRVAEAEIAAMIIEAE</sequence>
<feature type="chain" id="PRO_0000091644" description="3-hydroxyacyl-[acyl-carrier-protein] dehydratase FabZ">
    <location>
        <begin position="1"/>
        <end position="155"/>
    </location>
</feature>
<feature type="active site" evidence="1">
    <location>
        <position position="59"/>
    </location>
</feature>
<organism>
    <name type="scientific">Bartonella quintana (strain Toulouse)</name>
    <name type="common">Rochalimaea quintana</name>
    <dbReference type="NCBI Taxonomy" id="283165"/>
    <lineage>
        <taxon>Bacteria</taxon>
        <taxon>Pseudomonadati</taxon>
        <taxon>Pseudomonadota</taxon>
        <taxon>Alphaproteobacteria</taxon>
        <taxon>Hyphomicrobiales</taxon>
        <taxon>Bartonellaceae</taxon>
        <taxon>Bartonella</taxon>
    </lineage>
</organism>
<reference key="1">
    <citation type="journal article" date="2004" name="Proc. Natl. Acad. Sci. U.S.A.">
        <title>The louse-borne human pathogen Bartonella quintana is a genomic derivative of the zoonotic agent Bartonella henselae.</title>
        <authorList>
            <person name="Alsmark U.C.M."/>
            <person name="Frank A.C."/>
            <person name="Karlberg E.O."/>
            <person name="Legault B.-A."/>
            <person name="Ardell D.H."/>
            <person name="Canbaeck B."/>
            <person name="Eriksson A.-S."/>
            <person name="Naeslund A.K."/>
            <person name="Handley S.A."/>
            <person name="Huvet M."/>
            <person name="La Scola B."/>
            <person name="Holmberg M."/>
            <person name="Andersson S.G.E."/>
        </authorList>
    </citation>
    <scope>NUCLEOTIDE SEQUENCE [LARGE SCALE GENOMIC DNA]</scope>
    <source>
        <strain>Toulouse</strain>
    </source>
</reference>